<proteinExistence type="inferred from homology"/>
<keyword id="KW-0997">Cell inner membrane</keyword>
<keyword id="KW-1003">Cell membrane</keyword>
<keyword id="KW-0406">Ion transport</keyword>
<keyword id="KW-0472">Membrane</keyword>
<keyword id="KW-0630">Potassium</keyword>
<keyword id="KW-0633">Potassium transport</keyword>
<keyword id="KW-0812">Transmembrane</keyword>
<keyword id="KW-1133">Transmembrane helix</keyword>
<keyword id="KW-0813">Transport</keyword>
<accession>Q72TM7</accession>
<sequence length="557" mass="60808">MVTEWIQLLIFLFALLIFSPLFGLGLYKVYLYKTSGFEKFLYKICGIDPNRNMDWKEYALSLLVFNFFGFLLLFLILFFQNYLPLNPENFPGLVWDLAFNTAVSFTTNTNWQAYSGESTLSFFSQMAGLTTQNFLSATTGLCVLLALSRGISVNYNVFALGNFWKDMIRGTLYVLLPLSFIFALFLVGFGVVQTFSESVSAITLEGNTQIIPLGPVASQVAIKQLGTNGGGYFGVNASHPFENPSPISNFLQMFSILILPGACVFLYGRITGSIRHAWAIFSVMFTILCVGILIVWTFESSWNPISGTLGFWEGKEIRFGILNSSIWEVATTVASNGSVNSMHDSFSPIGGLVGILNIQLGEIVFGGVGAGMYGMILFVLLTVFLSGIMVGRSPEYLGKKIEKREIQMSILGILLPSTIILLFTAISVSVSDALSSLTNRGPHGLSEILYAFSSGAGNNGSAFAGLNANTTYYNVMIAIAMILGRFGVILPVLVIAGSLAQKKRSEIVSEGSFSTEGGTFYILLLSVIIIVGALTFFPVLTIGPILEHFIMFQNLTF</sequence>
<feature type="chain" id="PRO_0000166501" description="Potassium-transporting ATPase potassium-binding subunit">
    <location>
        <begin position="1"/>
        <end position="557"/>
    </location>
</feature>
<feature type="transmembrane region" description="Helical" evidence="1">
    <location>
        <begin position="6"/>
        <end position="26"/>
    </location>
</feature>
<feature type="transmembrane region" description="Helical" evidence="1">
    <location>
        <begin position="59"/>
        <end position="79"/>
    </location>
</feature>
<feature type="transmembrane region" description="Helical" evidence="1">
    <location>
        <begin position="127"/>
        <end position="147"/>
    </location>
</feature>
<feature type="transmembrane region" description="Helical" evidence="1">
    <location>
        <begin position="172"/>
        <end position="192"/>
    </location>
</feature>
<feature type="transmembrane region" description="Helical" evidence="1">
    <location>
        <begin position="247"/>
        <end position="267"/>
    </location>
</feature>
<feature type="transmembrane region" description="Helical" evidence="1">
    <location>
        <begin position="278"/>
        <end position="298"/>
    </location>
</feature>
<feature type="transmembrane region" description="Helical" evidence="1">
    <location>
        <begin position="363"/>
        <end position="383"/>
    </location>
</feature>
<feature type="transmembrane region" description="Helical" evidence="1">
    <location>
        <begin position="410"/>
        <end position="430"/>
    </location>
</feature>
<feature type="transmembrane region" description="Helical" evidence="1">
    <location>
        <begin position="475"/>
        <end position="495"/>
    </location>
</feature>
<feature type="transmembrane region" description="Helical" evidence="1">
    <location>
        <begin position="520"/>
        <end position="540"/>
    </location>
</feature>
<evidence type="ECO:0000255" key="1">
    <source>
        <dbReference type="HAMAP-Rule" id="MF_00275"/>
    </source>
</evidence>
<protein>
    <recommendedName>
        <fullName evidence="1">Potassium-transporting ATPase potassium-binding subunit</fullName>
    </recommendedName>
    <alternativeName>
        <fullName evidence="1">ATP phosphohydrolase [potassium-transporting] A chain</fullName>
    </alternativeName>
    <alternativeName>
        <fullName evidence="1">Potassium-binding and translocating subunit A</fullName>
    </alternativeName>
    <alternativeName>
        <fullName evidence="1">Potassium-translocating ATPase A chain</fullName>
    </alternativeName>
</protein>
<name>KDPA_LEPIC</name>
<reference key="1">
    <citation type="journal article" date="2004" name="J. Bacteriol.">
        <title>Comparative genomics of two Leptospira interrogans serovars reveals novel insights into physiology and pathogenesis.</title>
        <authorList>
            <person name="Nascimento A.L.T.O."/>
            <person name="Ko A.I."/>
            <person name="Martins E.A.L."/>
            <person name="Monteiro-Vitorello C.B."/>
            <person name="Ho P.L."/>
            <person name="Haake D.A."/>
            <person name="Verjovski-Almeida S."/>
            <person name="Hartskeerl R.A."/>
            <person name="Marques M.V."/>
            <person name="Oliveira M.C."/>
            <person name="Menck C.F.M."/>
            <person name="Leite L.C.C."/>
            <person name="Carrer H."/>
            <person name="Coutinho L.L."/>
            <person name="Degrave W.M."/>
            <person name="Dellagostin O.A."/>
            <person name="El-Dorry H."/>
            <person name="Ferro E.S."/>
            <person name="Ferro M.I.T."/>
            <person name="Furlan L.R."/>
            <person name="Gamberini M."/>
            <person name="Giglioti E.A."/>
            <person name="Goes-Neto A."/>
            <person name="Goldman G.H."/>
            <person name="Goldman M.H.S."/>
            <person name="Harakava R."/>
            <person name="Jeronimo S.M.B."/>
            <person name="Junqueira-de-Azevedo I.L.M."/>
            <person name="Kimura E.T."/>
            <person name="Kuramae E.E."/>
            <person name="Lemos E.G.M."/>
            <person name="Lemos M.V.F."/>
            <person name="Marino C.L."/>
            <person name="Nunes L.R."/>
            <person name="de Oliveira R.C."/>
            <person name="Pereira G.G."/>
            <person name="Reis M.S."/>
            <person name="Schriefer A."/>
            <person name="Siqueira W.J."/>
            <person name="Sommer P."/>
            <person name="Tsai S.M."/>
            <person name="Simpson A.J.G."/>
            <person name="Ferro J.A."/>
            <person name="Camargo L.E.A."/>
            <person name="Kitajima J.P."/>
            <person name="Setubal J.C."/>
            <person name="Van Sluys M.A."/>
        </authorList>
    </citation>
    <scope>NUCLEOTIDE SEQUENCE [LARGE SCALE GENOMIC DNA]</scope>
    <source>
        <strain>Fiocruz L1-130</strain>
    </source>
</reference>
<comment type="function">
    <text evidence="1">Part of the high-affinity ATP-driven potassium transport (or Kdp) system, which catalyzes the hydrolysis of ATP coupled with the electrogenic transport of potassium into the cytoplasm. This subunit binds the periplasmic potassium ions and delivers the ions to the membrane domain of KdpB through an intramembrane tunnel.</text>
</comment>
<comment type="subunit">
    <text evidence="1">The system is composed of three essential subunits: KdpA, KdpB and KdpC.</text>
</comment>
<comment type="subcellular location">
    <subcellularLocation>
        <location evidence="1">Cell inner membrane</location>
        <topology evidence="1">Multi-pass membrane protein</topology>
    </subcellularLocation>
</comment>
<comment type="similarity">
    <text evidence="1">Belongs to the KdpA family.</text>
</comment>
<organism>
    <name type="scientific">Leptospira interrogans serogroup Icterohaemorrhagiae serovar copenhageni (strain Fiocruz L1-130)</name>
    <dbReference type="NCBI Taxonomy" id="267671"/>
    <lineage>
        <taxon>Bacteria</taxon>
        <taxon>Pseudomonadati</taxon>
        <taxon>Spirochaetota</taxon>
        <taxon>Spirochaetia</taxon>
        <taxon>Leptospirales</taxon>
        <taxon>Leptospiraceae</taxon>
        <taxon>Leptospira</taxon>
    </lineage>
</organism>
<dbReference type="EMBL" id="AE016823">
    <property type="protein sequence ID" value="AAS69601.1"/>
    <property type="molecule type" value="Genomic_DNA"/>
</dbReference>
<dbReference type="RefSeq" id="WP_000255836.1">
    <property type="nucleotide sequence ID" value="NC_005823.1"/>
</dbReference>
<dbReference type="SMR" id="Q72TM7"/>
<dbReference type="GeneID" id="61144315"/>
<dbReference type="KEGG" id="lic:LIC_10990"/>
<dbReference type="HOGENOM" id="CLU_018614_3_0_12"/>
<dbReference type="Proteomes" id="UP000007037">
    <property type="component" value="Chromosome I"/>
</dbReference>
<dbReference type="GO" id="GO:0005886">
    <property type="term" value="C:plasma membrane"/>
    <property type="evidence" value="ECO:0007669"/>
    <property type="project" value="UniProtKB-SubCell"/>
</dbReference>
<dbReference type="GO" id="GO:0008556">
    <property type="term" value="F:P-type potassium transmembrane transporter activity"/>
    <property type="evidence" value="ECO:0007669"/>
    <property type="project" value="InterPro"/>
</dbReference>
<dbReference type="GO" id="GO:0030955">
    <property type="term" value="F:potassium ion binding"/>
    <property type="evidence" value="ECO:0007669"/>
    <property type="project" value="UniProtKB-UniRule"/>
</dbReference>
<dbReference type="HAMAP" id="MF_00275">
    <property type="entry name" value="KdpA"/>
    <property type="match status" value="1"/>
</dbReference>
<dbReference type="InterPro" id="IPR004623">
    <property type="entry name" value="KdpA"/>
</dbReference>
<dbReference type="NCBIfam" id="TIGR00680">
    <property type="entry name" value="kdpA"/>
    <property type="match status" value="1"/>
</dbReference>
<dbReference type="PANTHER" id="PTHR30607">
    <property type="entry name" value="POTASSIUM-TRANSPORTING ATPASE A CHAIN"/>
    <property type="match status" value="1"/>
</dbReference>
<dbReference type="PANTHER" id="PTHR30607:SF2">
    <property type="entry name" value="POTASSIUM-TRANSPORTING ATPASE POTASSIUM-BINDING SUBUNIT"/>
    <property type="match status" value="1"/>
</dbReference>
<dbReference type="Pfam" id="PF03814">
    <property type="entry name" value="KdpA"/>
    <property type="match status" value="1"/>
</dbReference>
<dbReference type="PIRSF" id="PIRSF001294">
    <property type="entry name" value="K_ATPaseA"/>
    <property type="match status" value="1"/>
</dbReference>
<gene>
    <name evidence="1" type="primary">kdpA</name>
    <name type="ordered locus">LIC_10990</name>
</gene>